<sequence>MGNSVMEKIKGGLVVSCQALEDEPLHSAFIMSKMALAAVQGGAVGIRANTAKDIRAIQSEIDVPIIGIYKKDYDDSDVFITPTLEEVREICETGVEIVAMDATTRKRPHNEDLKDILNAIRKEFPNTLFMADTGSIEDVYYADSLGFDLIGTTLYGYTEETANKNISDDDFSHLKEVLKSTKRPVIAEGKIDSPSKARQVLTLGCYAVVVGGAVTRPQEITTRFTNEIKKI</sequence>
<reference key="1">
    <citation type="journal article" date="2004" name="Nucleic Acids Res.">
        <title>Whole genome comparisons of serotype 4b and 1/2a strains of the food-borne pathogen Listeria monocytogenes reveal new insights into the core genome components of this species.</title>
        <authorList>
            <person name="Nelson K.E."/>
            <person name="Fouts D.E."/>
            <person name="Mongodin E.F."/>
            <person name="Ravel J."/>
            <person name="DeBoy R.T."/>
            <person name="Kolonay J.F."/>
            <person name="Rasko D.A."/>
            <person name="Angiuoli S.V."/>
            <person name="Gill S.R."/>
            <person name="Paulsen I.T."/>
            <person name="Peterson J.D."/>
            <person name="White O."/>
            <person name="Nelson W.C."/>
            <person name="Nierman W.C."/>
            <person name="Beanan M.J."/>
            <person name="Brinkac L.M."/>
            <person name="Daugherty S.C."/>
            <person name="Dodson R.J."/>
            <person name="Durkin A.S."/>
            <person name="Madupu R."/>
            <person name="Haft D.H."/>
            <person name="Selengut J."/>
            <person name="Van Aken S.E."/>
            <person name="Khouri H.M."/>
            <person name="Fedorova N."/>
            <person name="Forberger H.A."/>
            <person name="Tran B."/>
            <person name="Kathariou S."/>
            <person name="Wonderling L.D."/>
            <person name="Uhlich G.A."/>
            <person name="Bayles D.O."/>
            <person name="Luchansky J.B."/>
            <person name="Fraser C.M."/>
        </authorList>
    </citation>
    <scope>NUCLEOTIDE SEQUENCE [LARGE SCALE GENOMIC DNA]</scope>
    <source>
        <strain>F2365</strain>
    </source>
</reference>
<proteinExistence type="inferred from homology"/>
<dbReference type="EC" id="5.1.3.9" evidence="1"/>
<dbReference type="EMBL" id="AE017262">
    <property type="protein sequence ID" value="AAT05554.1"/>
    <property type="status" value="ALT_INIT"/>
    <property type="molecule type" value="Genomic_DNA"/>
</dbReference>
<dbReference type="RefSeq" id="WP_014929278.1">
    <property type="nucleotide sequence ID" value="NC_002973.6"/>
</dbReference>
<dbReference type="SMR" id="Q71VW2"/>
<dbReference type="KEGG" id="lmf:LMOf2365_2789"/>
<dbReference type="HOGENOM" id="CLU_086300_1_0_9"/>
<dbReference type="UniPathway" id="UPA00629">
    <property type="reaction ID" value="UER00682"/>
</dbReference>
<dbReference type="GO" id="GO:0005829">
    <property type="term" value="C:cytosol"/>
    <property type="evidence" value="ECO:0007669"/>
    <property type="project" value="TreeGrafter"/>
</dbReference>
<dbReference type="GO" id="GO:0047465">
    <property type="term" value="F:N-acylglucosamine-6-phosphate 2-epimerase activity"/>
    <property type="evidence" value="ECO:0007669"/>
    <property type="project" value="UniProtKB-EC"/>
</dbReference>
<dbReference type="GO" id="GO:0005975">
    <property type="term" value="P:carbohydrate metabolic process"/>
    <property type="evidence" value="ECO:0007669"/>
    <property type="project" value="UniProtKB-UniRule"/>
</dbReference>
<dbReference type="GO" id="GO:0006053">
    <property type="term" value="P:N-acetylmannosamine catabolic process"/>
    <property type="evidence" value="ECO:0007669"/>
    <property type="project" value="TreeGrafter"/>
</dbReference>
<dbReference type="GO" id="GO:0019262">
    <property type="term" value="P:N-acetylneuraminate catabolic process"/>
    <property type="evidence" value="ECO:0007669"/>
    <property type="project" value="UniProtKB-UniRule"/>
</dbReference>
<dbReference type="CDD" id="cd04729">
    <property type="entry name" value="NanE"/>
    <property type="match status" value="1"/>
</dbReference>
<dbReference type="FunFam" id="3.20.20.70:FF:000035">
    <property type="entry name" value="Putative N-acetylmannosamine-6-phosphate 2-epimerase"/>
    <property type="match status" value="1"/>
</dbReference>
<dbReference type="Gene3D" id="3.20.20.70">
    <property type="entry name" value="Aldolase class I"/>
    <property type="match status" value="1"/>
</dbReference>
<dbReference type="HAMAP" id="MF_01235">
    <property type="entry name" value="ManNAc6P_epimer"/>
    <property type="match status" value="1"/>
</dbReference>
<dbReference type="InterPro" id="IPR013785">
    <property type="entry name" value="Aldolase_TIM"/>
</dbReference>
<dbReference type="InterPro" id="IPR007260">
    <property type="entry name" value="NanE"/>
</dbReference>
<dbReference type="InterPro" id="IPR011060">
    <property type="entry name" value="RibuloseP-bd_barrel"/>
</dbReference>
<dbReference type="NCBIfam" id="NF002231">
    <property type="entry name" value="PRK01130.1"/>
    <property type="match status" value="1"/>
</dbReference>
<dbReference type="PANTHER" id="PTHR36204">
    <property type="entry name" value="N-ACETYLMANNOSAMINE-6-PHOSPHATE 2-EPIMERASE-RELATED"/>
    <property type="match status" value="1"/>
</dbReference>
<dbReference type="PANTHER" id="PTHR36204:SF1">
    <property type="entry name" value="N-ACETYLMANNOSAMINE-6-PHOSPHATE 2-EPIMERASE-RELATED"/>
    <property type="match status" value="1"/>
</dbReference>
<dbReference type="Pfam" id="PF04131">
    <property type="entry name" value="NanE"/>
    <property type="match status" value="1"/>
</dbReference>
<dbReference type="SUPFAM" id="SSF51366">
    <property type="entry name" value="Ribulose-phoshate binding barrel"/>
    <property type="match status" value="1"/>
</dbReference>
<feature type="chain" id="PRO_0000179782" description="Putative N-acetylmannosamine-6-phosphate 2-epimerase">
    <location>
        <begin position="1"/>
        <end position="231"/>
    </location>
</feature>
<evidence type="ECO:0000255" key="1">
    <source>
        <dbReference type="HAMAP-Rule" id="MF_01235"/>
    </source>
</evidence>
<evidence type="ECO:0000305" key="2"/>
<protein>
    <recommendedName>
        <fullName evidence="1">Putative N-acetylmannosamine-6-phosphate 2-epimerase</fullName>
        <ecNumber evidence="1">5.1.3.9</ecNumber>
    </recommendedName>
    <alternativeName>
        <fullName evidence="1">ManNAc-6-P epimerase</fullName>
    </alternativeName>
</protein>
<organism>
    <name type="scientific">Listeria monocytogenes serotype 4b (strain F2365)</name>
    <dbReference type="NCBI Taxonomy" id="265669"/>
    <lineage>
        <taxon>Bacteria</taxon>
        <taxon>Bacillati</taxon>
        <taxon>Bacillota</taxon>
        <taxon>Bacilli</taxon>
        <taxon>Bacillales</taxon>
        <taxon>Listeriaceae</taxon>
        <taxon>Listeria</taxon>
    </lineage>
</organism>
<gene>
    <name evidence="1" type="primary">nanE</name>
    <name type="ordered locus">LMOf2365_2789</name>
</gene>
<comment type="function">
    <text evidence="1">Converts N-acetylmannosamine-6-phosphate (ManNAc-6-P) to N-acetylglucosamine-6-phosphate (GlcNAc-6-P).</text>
</comment>
<comment type="catalytic activity">
    <reaction evidence="1">
        <text>an N-acyl-D-glucosamine 6-phosphate = an N-acyl-D-mannosamine 6-phosphate</text>
        <dbReference type="Rhea" id="RHEA:23932"/>
        <dbReference type="ChEBI" id="CHEBI:57599"/>
        <dbReference type="ChEBI" id="CHEBI:57666"/>
        <dbReference type="EC" id="5.1.3.9"/>
    </reaction>
</comment>
<comment type="pathway">
    <text evidence="1">Amino-sugar metabolism; N-acetylneuraminate degradation; D-fructose 6-phosphate from N-acetylneuraminate: step 3/5.</text>
</comment>
<comment type="similarity">
    <text evidence="1">Belongs to the NanE family.</text>
</comment>
<comment type="sequence caution" evidence="2">
    <conflict type="erroneous initiation">
        <sequence resource="EMBL-CDS" id="AAT05554"/>
    </conflict>
</comment>
<accession>Q71VW2</accession>
<name>NANE_LISMF</name>
<keyword id="KW-0119">Carbohydrate metabolism</keyword>
<keyword id="KW-0413">Isomerase</keyword>